<feature type="chain" id="PRO_0000048763" description="Transcription factor SOX-15">
    <location>
        <begin position="1"/>
        <end position="231"/>
    </location>
</feature>
<feature type="DNA-binding region" description="HMG box" evidence="2">
    <location>
        <begin position="47"/>
        <end position="115"/>
    </location>
</feature>
<feature type="region of interest" description="Disordered" evidence="3">
    <location>
        <begin position="1"/>
        <end position="45"/>
    </location>
</feature>
<feature type="region of interest" description="Required to promote HAND1 transcriptional activator activity" evidence="7">
    <location>
        <begin position="1"/>
        <end position="45"/>
    </location>
</feature>
<feature type="region of interest" description="Disordered" evidence="3">
    <location>
        <begin position="111"/>
        <end position="136"/>
    </location>
</feature>
<feature type="region of interest" description="Interaction with FHL3" evidence="8">
    <location>
        <begin position="136"/>
        <end position="181"/>
    </location>
</feature>
<feature type="region of interest" description="Disordered" evidence="3">
    <location>
        <begin position="186"/>
        <end position="231"/>
    </location>
</feature>
<feature type="compositionally biased region" description="Polar residues" evidence="3">
    <location>
        <begin position="1"/>
        <end position="11"/>
    </location>
</feature>
<feature type="compositionally biased region" description="Polar residues" evidence="3">
    <location>
        <begin position="211"/>
        <end position="221"/>
    </location>
</feature>
<feature type="modified residue" description="Phosphoserine" evidence="1">
    <location>
        <position position="35"/>
    </location>
</feature>
<feature type="sequence variant" description="In strain: various strains.">
    <original>E</original>
    <variation>G</variation>
    <location>
        <position position="135"/>
    </location>
</feature>
<feature type="sequence variant" description="In strain: various strains.">
    <original>A</original>
    <variation>S</variation>
    <location>
        <position position="224"/>
    </location>
</feature>
<feature type="sequence conflict" description="In Ref. 2; AAA56842." evidence="9" ref="2">
    <original>V</original>
    <variation>A</variation>
    <location>
        <position position="60"/>
    </location>
</feature>
<feature type="sequence conflict" description="In Ref. 1; BAA28604." evidence="9" ref="1">
    <original>K</original>
    <variation>E</variation>
    <location>
        <position position="71"/>
    </location>
</feature>
<feature type="sequence conflict" description="In Ref. 2; AAA56842." evidence="9" ref="2">
    <original>G</original>
    <variation>D</variation>
    <location>
        <position position="89"/>
    </location>
</feature>
<feature type="sequence conflict" description="In Ref. 6; CAB37848." evidence="9" ref="6">
    <original>V</original>
    <variation>M</variation>
    <location>
        <position position="97"/>
    </location>
</feature>
<feature type="sequence conflict" description="In Ref. 2; AAA56842." evidence="9" ref="2">
    <original>R</original>
    <variation>H</variation>
    <location>
        <position position="109"/>
    </location>
</feature>
<dbReference type="EMBL" id="AB014474">
    <property type="protein sequence ID" value="BAA28604.1"/>
    <property type="molecule type" value="Genomic_DNA"/>
</dbReference>
<dbReference type="EMBL" id="L29084">
    <property type="protein sequence ID" value="AAA56842.1"/>
    <property type="molecule type" value="mRNA"/>
</dbReference>
<dbReference type="EMBL" id="AF182945">
    <property type="protein sequence ID" value="AAF72108.1"/>
    <property type="molecule type" value="mRNA"/>
</dbReference>
<dbReference type="EMBL" id="AB039214">
    <property type="protein sequence ID" value="BAB68738.1"/>
    <property type="molecule type" value="Genomic_DNA"/>
</dbReference>
<dbReference type="EMBL" id="AB039215">
    <property type="protein sequence ID" value="BAB68739.1"/>
    <property type="molecule type" value="Genomic_DNA"/>
</dbReference>
<dbReference type="EMBL" id="AB039216">
    <property type="protein sequence ID" value="BAB68740.1"/>
    <property type="molecule type" value="Genomic_DNA"/>
</dbReference>
<dbReference type="EMBL" id="AB039217">
    <property type="protein sequence ID" value="BAB68741.1"/>
    <property type="molecule type" value="Genomic_DNA"/>
</dbReference>
<dbReference type="EMBL" id="AB039218">
    <property type="protein sequence ID" value="BAB68742.1"/>
    <property type="molecule type" value="Genomic_DNA"/>
</dbReference>
<dbReference type="EMBL" id="AB039219">
    <property type="protein sequence ID" value="BAB68743.1"/>
    <property type="molecule type" value="Genomic_DNA"/>
</dbReference>
<dbReference type="EMBL" id="AB039220">
    <property type="protein sequence ID" value="BAB68744.1"/>
    <property type="molecule type" value="Genomic_DNA"/>
</dbReference>
<dbReference type="EMBL" id="AB039221">
    <property type="protein sequence ID" value="BAB68745.1"/>
    <property type="molecule type" value="Genomic_DNA"/>
</dbReference>
<dbReference type="EMBL" id="AB039222">
    <property type="protein sequence ID" value="BAB68746.1"/>
    <property type="molecule type" value="Genomic_DNA"/>
</dbReference>
<dbReference type="EMBL" id="U70443">
    <property type="protein sequence ID" value="AAC52861.1"/>
    <property type="molecule type" value="mRNA"/>
</dbReference>
<dbReference type="EMBL" id="X70909">
    <property type="protein sequence ID" value="CAB37848.1"/>
    <property type="molecule type" value="Genomic_DNA"/>
</dbReference>
<dbReference type="EMBL" id="X98369">
    <property type="protein sequence ID" value="CAA67015.1"/>
    <property type="molecule type" value="mRNA"/>
</dbReference>
<dbReference type="CCDS" id="CCDS24902.1"/>
<dbReference type="PIR" id="S33715">
    <property type="entry name" value="S33715"/>
</dbReference>
<dbReference type="RefSeq" id="NP_033261.1">
    <property type="nucleotide sequence ID" value="NM_009235.2"/>
</dbReference>
<dbReference type="SMR" id="P43267"/>
<dbReference type="BioGRID" id="203402">
    <property type="interactions" value="5"/>
</dbReference>
<dbReference type="FunCoup" id="P43267">
    <property type="interactions" value="35"/>
</dbReference>
<dbReference type="IntAct" id="P43267">
    <property type="interactions" value="4"/>
</dbReference>
<dbReference type="MINT" id="P43267"/>
<dbReference type="STRING" id="10090.ENSMUSP00000048524"/>
<dbReference type="GlyGen" id="P43267">
    <property type="glycosylation" value="5 sites, 1 O-linked glycan (5 sites)"/>
</dbReference>
<dbReference type="PhosphoSitePlus" id="P43267"/>
<dbReference type="PaxDb" id="10090-ENSMUSP00000048524"/>
<dbReference type="ProteomicsDB" id="261613"/>
<dbReference type="ProteomicsDB" id="261614"/>
<dbReference type="Antibodypedia" id="12118">
    <property type="antibodies" value="196 antibodies from 32 providers"/>
</dbReference>
<dbReference type="DNASU" id="20670"/>
<dbReference type="Ensembl" id="ENSMUST00000047373.6">
    <property type="protein sequence ID" value="ENSMUSP00000048524.6"/>
    <property type="gene ID" value="ENSMUSG00000041287.6"/>
</dbReference>
<dbReference type="GeneID" id="20670"/>
<dbReference type="KEGG" id="mmu:20670"/>
<dbReference type="UCSC" id="uc007jqu.2">
    <property type="organism name" value="mouse"/>
</dbReference>
<dbReference type="AGR" id="MGI:98363"/>
<dbReference type="CTD" id="6665"/>
<dbReference type="MGI" id="MGI:98363">
    <property type="gene designation" value="Sox15"/>
</dbReference>
<dbReference type="VEuPathDB" id="HostDB:ENSMUSG00000041287"/>
<dbReference type="eggNOG" id="KOG0527">
    <property type="taxonomic scope" value="Eukaryota"/>
</dbReference>
<dbReference type="GeneTree" id="ENSGT00940000162099"/>
<dbReference type="HOGENOM" id="CLU_106341_0_0_1"/>
<dbReference type="InParanoid" id="P43267"/>
<dbReference type="OMA" id="HCKPEAP"/>
<dbReference type="OrthoDB" id="6247875at2759"/>
<dbReference type="PhylomeDB" id="P43267"/>
<dbReference type="TreeFam" id="TF351735"/>
<dbReference type="BioGRID-ORCS" id="20670">
    <property type="hits" value="3 hits in 78 CRISPR screens"/>
</dbReference>
<dbReference type="PRO" id="PR:P43267"/>
<dbReference type="Proteomes" id="UP000000589">
    <property type="component" value="Chromosome 11"/>
</dbReference>
<dbReference type="RNAct" id="P43267">
    <property type="molecule type" value="protein"/>
</dbReference>
<dbReference type="Bgee" id="ENSMUSG00000041287">
    <property type="expression patterns" value="Expressed in morula and 80 other cell types or tissues"/>
</dbReference>
<dbReference type="ExpressionAtlas" id="P43267">
    <property type="expression patterns" value="baseline and differential"/>
</dbReference>
<dbReference type="GO" id="GO:0005737">
    <property type="term" value="C:cytoplasm"/>
    <property type="evidence" value="ECO:0000314"/>
    <property type="project" value="MGI"/>
</dbReference>
<dbReference type="GO" id="GO:0005634">
    <property type="term" value="C:nucleus"/>
    <property type="evidence" value="ECO:0000314"/>
    <property type="project" value="MGI"/>
</dbReference>
<dbReference type="GO" id="GO:0005667">
    <property type="term" value="C:transcription regulator complex"/>
    <property type="evidence" value="ECO:0000314"/>
    <property type="project" value="MGI"/>
</dbReference>
<dbReference type="GO" id="GO:0003682">
    <property type="term" value="F:chromatin binding"/>
    <property type="evidence" value="ECO:0000314"/>
    <property type="project" value="MGI"/>
</dbReference>
<dbReference type="GO" id="GO:0003677">
    <property type="term" value="F:DNA binding"/>
    <property type="evidence" value="ECO:0000314"/>
    <property type="project" value="MGI"/>
</dbReference>
<dbReference type="GO" id="GO:0000981">
    <property type="term" value="F:DNA-binding transcription factor activity, RNA polymerase II-specific"/>
    <property type="evidence" value="ECO:0000314"/>
    <property type="project" value="MGI"/>
</dbReference>
<dbReference type="GO" id="GO:0000978">
    <property type="term" value="F:RNA polymerase II cis-regulatory region sequence-specific DNA binding"/>
    <property type="evidence" value="ECO:0000316"/>
    <property type="project" value="MGI"/>
</dbReference>
<dbReference type="GO" id="GO:0030154">
    <property type="term" value="P:cell differentiation"/>
    <property type="evidence" value="ECO:0000316"/>
    <property type="project" value="MGI"/>
</dbReference>
<dbReference type="GO" id="GO:0048627">
    <property type="term" value="P:myoblast development"/>
    <property type="evidence" value="ECO:0000315"/>
    <property type="project" value="MGI"/>
</dbReference>
<dbReference type="GO" id="GO:0045843">
    <property type="term" value="P:negative regulation of striated muscle tissue development"/>
    <property type="evidence" value="ECO:0000314"/>
    <property type="project" value="MGI"/>
</dbReference>
<dbReference type="GO" id="GO:0000122">
    <property type="term" value="P:negative regulation of transcription by RNA polymerase II"/>
    <property type="evidence" value="ECO:0000314"/>
    <property type="project" value="MGI"/>
</dbReference>
<dbReference type="GO" id="GO:0070318">
    <property type="term" value="P:positive regulation of G0 to G1 transition"/>
    <property type="evidence" value="ECO:0000315"/>
    <property type="project" value="BHF-UCL"/>
</dbReference>
<dbReference type="GO" id="GO:2000288">
    <property type="term" value="P:positive regulation of myoblast proliferation"/>
    <property type="evidence" value="ECO:0000315"/>
    <property type="project" value="BHF-UCL"/>
</dbReference>
<dbReference type="GO" id="GO:0014718">
    <property type="term" value="P:positive regulation of satellite cell activation involved in skeletal muscle regeneration"/>
    <property type="evidence" value="ECO:0000315"/>
    <property type="project" value="BHF-UCL"/>
</dbReference>
<dbReference type="GO" id="GO:0045944">
    <property type="term" value="P:positive regulation of transcription by RNA polymerase II"/>
    <property type="evidence" value="ECO:0000314"/>
    <property type="project" value="MGI"/>
</dbReference>
<dbReference type="GO" id="GO:0043403">
    <property type="term" value="P:skeletal muscle tissue regeneration"/>
    <property type="evidence" value="ECO:0000315"/>
    <property type="project" value="MGI"/>
</dbReference>
<dbReference type="GO" id="GO:0060707">
    <property type="term" value="P:trophoblast giant cell differentiation"/>
    <property type="evidence" value="ECO:0000315"/>
    <property type="project" value="UniProtKB"/>
</dbReference>
<dbReference type="CDD" id="cd22028">
    <property type="entry name" value="HMG-box_SoxA_SoxB_SoxG"/>
    <property type="match status" value="1"/>
</dbReference>
<dbReference type="FunFam" id="1.10.30.10:FF:000002">
    <property type="entry name" value="transcription factor Sox-2"/>
    <property type="match status" value="1"/>
</dbReference>
<dbReference type="Gene3D" id="1.10.30.10">
    <property type="entry name" value="High mobility group box domain"/>
    <property type="match status" value="1"/>
</dbReference>
<dbReference type="InterPro" id="IPR009071">
    <property type="entry name" value="HMG_box_dom"/>
</dbReference>
<dbReference type="InterPro" id="IPR036910">
    <property type="entry name" value="HMG_box_dom_sf"/>
</dbReference>
<dbReference type="InterPro" id="IPR050140">
    <property type="entry name" value="SRY-related_HMG-box_TF-like"/>
</dbReference>
<dbReference type="PANTHER" id="PTHR10270:SF45">
    <property type="entry name" value="PROTEIN SOX-15"/>
    <property type="match status" value="1"/>
</dbReference>
<dbReference type="PANTHER" id="PTHR10270">
    <property type="entry name" value="SOX TRANSCRIPTION FACTOR"/>
    <property type="match status" value="1"/>
</dbReference>
<dbReference type="Pfam" id="PF00505">
    <property type="entry name" value="HMG_box"/>
    <property type="match status" value="1"/>
</dbReference>
<dbReference type="SMART" id="SM00398">
    <property type="entry name" value="HMG"/>
    <property type="match status" value="1"/>
</dbReference>
<dbReference type="SUPFAM" id="SSF47095">
    <property type="entry name" value="HMG-box"/>
    <property type="match status" value="1"/>
</dbReference>
<dbReference type="PROSITE" id="PS50118">
    <property type="entry name" value="HMG_BOX_2"/>
    <property type="match status" value="1"/>
</dbReference>
<reference key="1">
    <citation type="journal article" date="1999" name="Gene">
        <title>Five different genes, Eif4a1, Cd68, Supl15h, Sox15 and Fxr2h, are clustered in a 40 kb region of mouse chromosome 11.</title>
        <authorList>
            <person name="Miyashita A."/>
            <person name="Shimizu N."/>
            <person name="Endo N."/>
            <person name="Hanyuu T."/>
            <person name="Ishii N."/>
            <person name="Ito K."/>
            <person name="Itoh Y."/>
            <person name="Shirai M."/>
            <person name="Nakajima T."/>
            <person name="Odani S."/>
            <person name="Kuwano R."/>
        </authorList>
    </citation>
    <scope>NUCLEOTIDE SEQUENCE [GENOMIC DNA]</scope>
    <source>
        <strain>129</strain>
    </source>
</reference>
<reference evidence="10" key="2">
    <citation type="submission" date="1994-02" db="EMBL/GenBank/DDBJ databases">
        <authorList>
            <person name="Layfield R."/>
            <person name="Mynett-Johnson L."/>
            <person name="Yarwood P.J."/>
            <person name="Muscat G.E.O."/>
            <person name="Koopman P.A."/>
            <person name="Hume D.A."/>
        </authorList>
    </citation>
    <scope>NUCLEOTIDE SEQUENCE [MRNA] OF 55-111</scope>
    <source>
        <tissue>Bone marrow</tissue>
    </source>
</reference>
<reference key="3">
    <citation type="journal article" date="2000" name="J. Biol. Chem.">
        <title>Muscle differentiation is antagonized by SOX15, a new member of the SOX protein family.</title>
        <authorList>
            <person name="Beranger F."/>
            <person name="Mejean C."/>
            <person name="Moniot B."/>
            <person name="Berta P."/>
            <person name="Vandromme M."/>
        </authorList>
    </citation>
    <scope>NUCLEOTIDE SEQUENCE [MRNA]</scope>
    <scope>FUNCTION</scope>
    <scope>SUBCELLULAR LOCATION</scope>
    <scope>TISSUE SPECIFICITY</scope>
    <scope>DEVELOPMENTAL STAGE</scope>
</reference>
<reference key="4">
    <citation type="submission" date="2000-02" db="EMBL/GenBank/DDBJ databases">
        <title>Conspicuous differences among gene genealogies of 21 nuclear genes of five Mus musculus subspecies.</title>
        <authorList>
            <person name="Liu Y."/>
            <person name="Kitano T."/>
            <person name="Koide T."/>
            <person name="Shiroishi T."/>
            <person name="Moriwaki K."/>
            <person name="Saitou N."/>
        </authorList>
    </citation>
    <scope>NUCLEOTIDE SEQUENCE [GENOMIC DNA] OF 8-231</scope>
    <source>
        <strain>BFM/2Msf</strain>
        <strain>BLG2/Msf</strain>
        <strain>C57BL/10SnJ</strain>
        <strain>CAST/EiJ</strain>
        <strain>HMI/Msf</strain>
        <strain>MSM/Msf</strain>
        <strain>NJL/Msf</strain>
        <strain>pgn2</strain>
        <strain>SWN/Msf</strain>
    </source>
</reference>
<reference key="5">
    <citation type="journal article" date="1996" name="Genomics">
        <title>Numerous members of the Sox family of HMG box-containing genes are expressed in developing mouse teeth.</title>
        <authorList>
            <person name="Stock D.W."/>
            <person name="Buchanan A.V."/>
            <person name="Zhao Z."/>
            <person name="Weiss K.M."/>
        </authorList>
    </citation>
    <scope>NUCLEOTIDE SEQUENCE [MRNA] OF 57-110</scope>
    <source>
        <strain>Swiss Webster</strain>
        <tissue>Embryonic tooth</tissue>
    </source>
</reference>
<reference key="6">
    <citation type="journal article" date="1993" name="Nucleic Acids Res.">
        <title>Sox 15, a novel member of the murine Sox family of HMG box transcription factors.</title>
        <authorList>
            <person name="van de Wetering M."/>
            <person name="Clevers H."/>
        </authorList>
    </citation>
    <scope>NUCLEOTIDE SEQUENCE [GENOMIC DNA] OF 58-111</scope>
    <source>
        <strain>C57BL/6J</strain>
    </source>
</reference>
<reference key="7">
    <citation type="submission" date="1995-12" db="EMBL/GenBank/DDBJ databases">
        <authorList>
            <person name="Lim F.L."/>
        </authorList>
    </citation>
    <scope>NUCLEOTIDE SEQUENCE [MRNA] OF 92-231</scope>
    <source>
        <tissue>Pancreatic islet</tissue>
    </source>
</reference>
<reference key="8">
    <citation type="journal article" date="2004" name="Mol. Cell. Biol.">
        <title>Sox15 is required for skeletal muscle regeneration.</title>
        <authorList>
            <person name="Lee H.J."/>
            <person name="Goering W."/>
            <person name="Ochs M."/>
            <person name="Muehlfeld C."/>
            <person name="Steding G."/>
            <person name="Paprotta I."/>
            <person name="Engel W."/>
            <person name="Adham I.M."/>
        </authorList>
    </citation>
    <scope>FUNCTION</scope>
    <scope>SUBCELLULAR LOCATION</scope>
    <scope>TISSUE SPECIFICITY</scope>
    <scope>DISRUPTION PHENOTYPE</scope>
</reference>
<reference key="9">
    <citation type="journal article" date="2005" name="J. Biol. Chem.">
        <title>Differential roles for Sox15 and Sox2 in transcriptional control in mouse embryonic stem cells.</title>
        <authorList>
            <person name="Maruyama M."/>
            <person name="Ichisaka T."/>
            <person name="Nakagawa M."/>
            <person name="Yamanaka S."/>
        </authorList>
    </citation>
    <scope>FUNCTION</scope>
    <scope>INTERACTION WITH POU5F1</scope>
    <scope>TISSUE SPECIFICITY</scope>
    <scope>DISRUPTION PHENOTYPE</scope>
</reference>
<reference key="10">
    <citation type="journal article" date="2006" name="Differentiation">
        <title>Sox15 enhances trophoblast giant cell differentiation induced by Hand1 in mouse placenta.</title>
        <authorList>
            <person name="Yamada K."/>
            <person name="Kanda H."/>
            <person name="Tanaka S."/>
            <person name="Takamatsu N."/>
            <person name="Shiba T."/>
            <person name="Ito M."/>
        </authorList>
    </citation>
    <scope>FUNCTION</scope>
    <scope>INTERACTION WITH HAND1</scope>
    <scope>TISSUE SPECIFICITY</scope>
    <scope>DEVELOPMENTAL STAGE</scope>
</reference>
<reference key="11">
    <citation type="journal article" date="2007" name="EMBO J.">
        <title>Sox15 and Fhl3 transcriptionally coactivate Foxk1 and regulate myogenic progenitor cells.</title>
        <authorList>
            <person name="Meeson A.P."/>
            <person name="Shi X."/>
            <person name="Alexander M.S."/>
            <person name="Williams R.S."/>
            <person name="Allen R.E."/>
            <person name="Jiang N."/>
            <person name="Adham I.M."/>
            <person name="Goetsch S.C."/>
            <person name="Hammer R.E."/>
            <person name="Garry D.J."/>
        </authorList>
    </citation>
    <scope>FUNCTION</scope>
    <scope>INTERACTION WITH FHL3</scope>
    <scope>SUBCELLULAR LOCATION</scope>
    <scope>TISSUE SPECIFICITY</scope>
    <scope>DISRUPTION PHENOTYPE</scope>
</reference>
<evidence type="ECO:0000250" key="1">
    <source>
        <dbReference type="UniProtKB" id="O60248"/>
    </source>
</evidence>
<evidence type="ECO:0000255" key="2">
    <source>
        <dbReference type="PROSITE-ProRule" id="PRU00267"/>
    </source>
</evidence>
<evidence type="ECO:0000256" key="3">
    <source>
        <dbReference type="SAM" id="MobiDB-lite"/>
    </source>
</evidence>
<evidence type="ECO:0000269" key="4">
    <source>
    </source>
</evidence>
<evidence type="ECO:0000269" key="5">
    <source>
    </source>
</evidence>
<evidence type="ECO:0000269" key="6">
    <source>
    </source>
</evidence>
<evidence type="ECO:0000269" key="7">
    <source>
    </source>
</evidence>
<evidence type="ECO:0000269" key="8">
    <source>
    </source>
</evidence>
<evidence type="ECO:0000305" key="9"/>
<evidence type="ECO:0000312" key="10">
    <source>
        <dbReference type="EMBL" id="AAA56842.1"/>
    </source>
</evidence>
<evidence type="ECO:0000312" key="11">
    <source>
        <dbReference type="MGI" id="MGI:98363"/>
    </source>
</evidence>
<organism>
    <name type="scientific">Mus musculus</name>
    <name type="common">Mouse</name>
    <dbReference type="NCBI Taxonomy" id="10090"/>
    <lineage>
        <taxon>Eukaryota</taxon>
        <taxon>Metazoa</taxon>
        <taxon>Chordata</taxon>
        <taxon>Craniata</taxon>
        <taxon>Vertebrata</taxon>
        <taxon>Euteleostomi</taxon>
        <taxon>Mammalia</taxon>
        <taxon>Eutheria</taxon>
        <taxon>Euarchontoglires</taxon>
        <taxon>Glires</taxon>
        <taxon>Rodentia</taxon>
        <taxon>Myomorpha</taxon>
        <taxon>Muroidea</taxon>
        <taxon>Muridae</taxon>
        <taxon>Murinae</taxon>
        <taxon>Mus</taxon>
        <taxon>Mus</taxon>
    </lineage>
</organism>
<proteinExistence type="evidence at protein level"/>
<sequence>MALTSSSQAETWSLHPRASTASLPLGPQEQEAGGSPGASGGLPLEKVKRPMNAFMVWSSVQRRQMAQQNPKMHNSEISKRLGAQWKLLGDEEKRPFVEEAKRLRARHLRDYPDYKYRPRRKSKNSSTGSVPFSQEGGGLACGGSHWGPGYTTTQGSRGFGYQPPNYSTAYLPGSYTSSHCRPEAPLPCTFPQSDPRLQGELRPSFSPYLSPDSSTPYNTSLAGAPMPVTHL</sequence>
<protein>
    <recommendedName>
        <fullName evidence="9">Transcription factor SOX-15</fullName>
    </recommendedName>
    <alternativeName>
        <fullName evidence="1">SRY-box transcription factor 15</fullName>
    </alternativeName>
</protein>
<name>SOX15_MOUSE</name>
<gene>
    <name evidence="11" type="primary">Sox15</name>
    <name type="synonym">Sox-15</name>
    <name evidence="9" type="synonym">Sox16</name>
</gene>
<comment type="function">
    <text evidence="4 5 6 7 8">Transcription factor that binds to DNA at the 5'-AACAATG-3' consensus sequence (PubMed:10821863, PubMed:15863505, PubMed:16759287, PubMed:17363903). Acts as a transcriptional activator and repressor (PubMed:10821863, PubMed:15863505, PubMed:16759287). Binds synergistically with POU5F1 (OCT3/4) to gene promoters (PubMed:15863505). Binds to the FOXK1 promoter and recruits FHL3, resulting in transcriptional activation of FOXK1 which leads to myoblast proliferation (PubMed:17363903). Acts as an inhibitor of myoblast differentiation via transcriptional repression which leads to down-regulation of the muscle-specific genes MYOD and MYOG (PubMed:10821863). Involved in trophoblast giant cell differentiation via enhancement of HAND1 transcriptional activity (PubMed:16759287). Regulates transcription of HRC via binding to its proximal enhancer region (PubMed:15863505). Involved in skeletal muscle regeneration (PubMed:15367664, PubMed:17363903). Also plays a role in the development of myogenic precursor cells (PubMed:15367664).</text>
</comment>
<comment type="subunit">
    <text evidence="6 7 8">Interacts with HAND1; the interaction enhances HAND1-induced differentiation of trophoblast giant cells (PubMed:16759287). Interacts with POU5F1 (OCT3/4); binds synergistically with POU5F1 to DNA (PubMed:15863505). Interacts with FHL3; the interaction recruits the transcriptional coactivator FHL3 to the FOXK1 promoter (PubMed:17363903).</text>
</comment>
<comment type="interaction">
    <interactant intactId="EBI-7332587">
        <id>P43267</id>
    </interactant>
    <interactant intactId="EBI-7332617">
        <id>Q9R059</id>
        <label>Fhl3</label>
    </interactant>
    <organismsDiffer>false</organismsDiffer>
    <experiments>7</experiments>
</comment>
<comment type="subcellular location">
    <subcellularLocation>
        <location evidence="2 4 5 8">Nucleus</location>
    </subcellularLocation>
</comment>
<comment type="tissue specificity">
    <text evidence="4 5 6 7 8">Expressed in myoblasts (at protein level) (PubMed:15367664). Expressed in embryonic stem cells (at protein level) (PubMed:15367664, PubMed:15863505). Expressed in myogenic progenitor cells (at protein level) (PubMed:17363903). Expressed in the ovary (PubMed:15367664). Expressed in kidney, liver, skeletal muscle, and testes (PubMed:10821863, PubMed:15367664). Expressed in lung and skin (PubMed:15863505). Expressed in the brain, heart, diaphragm, and intestines (PubMed:10821863). Expressed in the conceptus tissues of the placenta (PubMed:16759287).</text>
</comment>
<comment type="developmental stage">
    <text evidence="4 7">Highly expressed in the conceptus ectoplacental cone of the placenta at embryonic day 7.5 dpc (PubMed:16759287). Expressed in the conceptus trophoblast giant cell layer of the placenta (PubMed:16759287). Expressed in the trophoblast giant cells of the placenta from 10 dpc, expression peaks at 14 dpc, then reduces thereafter to 18 dpc (PubMed:16759287). Expression is increased during trophoblast differentiation (PubMed:16759287). Expressed at 8.5 dpc in developing embryos, with increased expression at 9.5 dpc (PubMed:10821863).</text>
</comment>
<comment type="disruption phenotype">
    <text evidence="5 6 8">Knockout mice are viable, morphologically normal and fertile (PubMed:15367664, PubMed:15863505). Reduced regeneration of damaged skeletal muscle fibers following injury with increased numbers of mononuclear cells and a significant reduction in the number of myofibers (PubMed:15367664, PubMed:17363903). Impaired proliferation of myogenic progenitor cells, reduced number of satellite cells within the tibialis anterior muscles, and a decrease in FOXK1 expression (PubMed:17363903).</text>
</comment>
<accession>P43267</accession>
<accession>O70204</accession>
<accession>P70418</accession>
<accession>Q62246</accession>
<accession>Q62247</accession>
<accession>Q91V00</accession>
<accession>Q91V43</accession>
<accession>Q920T1</accession>
<accession>Q9JLG2</accession>
<keyword id="KW-0010">Activator</keyword>
<keyword id="KW-0238">DNA-binding</keyword>
<keyword id="KW-0539">Nucleus</keyword>
<keyword id="KW-0597">Phosphoprotein</keyword>
<keyword id="KW-1185">Reference proteome</keyword>
<keyword id="KW-0678">Repressor</keyword>
<keyword id="KW-0804">Transcription</keyword>
<keyword id="KW-0805">Transcription regulation</keyword>